<proteinExistence type="inferred from homology"/>
<protein>
    <recommendedName>
        <fullName evidence="1">Large-conductance mechanosensitive channel</fullName>
    </recommendedName>
</protein>
<accession>Q9CDW0</accession>
<organism>
    <name type="scientific">Lactococcus lactis subsp. lactis (strain IL1403)</name>
    <name type="common">Streptococcus lactis</name>
    <dbReference type="NCBI Taxonomy" id="272623"/>
    <lineage>
        <taxon>Bacteria</taxon>
        <taxon>Bacillati</taxon>
        <taxon>Bacillota</taxon>
        <taxon>Bacilli</taxon>
        <taxon>Lactobacillales</taxon>
        <taxon>Streptococcaceae</taxon>
        <taxon>Lactococcus</taxon>
    </lineage>
</organism>
<sequence length="122" mass="13758">MLKEFKNFILRGNVLDLAVGVIIGAAFTALVKSLVDNLINPLIGMFVQSTALAHLSVTVGKTKFTYGAFLNDVINFIITAFVIFILIKFINKLFPKKEETVEEQKNEELETLQEIRDLLKKQ</sequence>
<dbReference type="EMBL" id="AE005176">
    <property type="protein sequence ID" value="AAK06199.1"/>
    <property type="molecule type" value="Genomic_DNA"/>
</dbReference>
<dbReference type="PIR" id="E86887">
    <property type="entry name" value="E86887"/>
</dbReference>
<dbReference type="RefSeq" id="NP_268258.1">
    <property type="nucleotide sequence ID" value="NC_002662.1"/>
</dbReference>
<dbReference type="RefSeq" id="WP_010906303.1">
    <property type="nucleotide sequence ID" value="NC_002662.1"/>
</dbReference>
<dbReference type="SMR" id="Q9CDW0"/>
<dbReference type="PaxDb" id="272623-L153973"/>
<dbReference type="EnsemblBacteria" id="AAK06199">
    <property type="protein sequence ID" value="AAK06199"/>
    <property type="gene ID" value="L153973"/>
</dbReference>
<dbReference type="GeneID" id="89634448"/>
<dbReference type="KEGG" id="lla:L153973"/>
<dbReference type="PATRIC" id="fig|272623.7.peg.2260"/>
<dbReference type="eggNOG" id="COG1970">
    <property type="taxonomic scope" value="Bacteria"/>
</dbReference>
<dbReference type="HOGENOM" id="CLU_095787_0_0_9"/>
<dbReference type="OrthoDB" id="9810350at2"/>
<dbReference type="Proteomes" id="UP000002196">
    <property type="component" value="Chromosome"/>
</dbReference>
<dbReference type="GO" id="GO:0005886">
    <property type="term" value="C:plasma membrane"/>
    <property type="evidence" value="ECO:0007669"/>
    <property type="project" value="UniProtKB-SubCell"/>
</dbReference>
<dbReference type="GO" id="GO:0008381">
    <property type="term" value="F:mechanosensitive monoatomic ion channel activity"/>
    <property type="evidence" value="ECO:0007669"/>
    <property type="project" value="UniProtKB-UniRule"/>
</dbReference>
<dbReference type="Gene3D" id="1.10.1200.120">
    <property type="entry name" value="Large-conductance mechanosensitive channel, MscL, domain 1"/>
    <property type="match status" value="1"/>
</dbReference>
<dbReference type="HAMAP" id="MF_00115">
    <property type="entry name" value="MscL"/>
    <property type="match status" value="1"/>
</dbReference>
<dbReference type="InterPro" id="IPR019823">
    <property type="entry name" value="Mechanosensitive_channel_CS"/>
</dbReference>
<dbReference type="InterPro" id="IPR001185">
    <property type="entry name" value="MS_channel"/>
</dbReference>
<dbReference type="InterPro" id="IPR037673">
    <property type="entry name" value="MSC/AndL"/>
</dbReference>
<dbReference type="InterPro" id="IPR036019">
    <property type="entry name" value="MscL_channel"/>
</dbReference>
<dbReference type="NCBIfam" id="TIGR00220">
    <property type="entry name" value="mscL"/>
    <property type="match status" value="1"/>
</dbReference>
<dbReference type="NCBIfam" id="NF001842">
    <property type="entry name" value="PRK00567.1-3"/>
    <property type="match status" value="1"/>
</dbReference>
<dbReference type="PANTHER" id="PTHR30266:SF2">
    <property type="entry name" value="LARGE-CONDUCTANCE MECHANOSENSITIVE CHANNEL"/>
    <property type="match status" value="1"/>
</dbReference>
<dbReference type="PANTHER" id="PTHR30266">
    <property type="entry name" value="MECHANOSENSITIVE CHANNEL MSCL"/>
    <property type="match status" value="1"/>
</dbReference>
<dbReference type="Pfam" id="PF01741">
    <property type="entry name" value="MscL"/>
    <property type="match status" value="1"/>
</dbReference>
<dbReference type="PRINTS" id="PR01264">
    <property type="entry name" value="MECHCHANNEL"/>
</dbReference>
<dbReference type="SUPFAM" id="SSF81330">
    <property type="entry name" value="Gated mechanosensitive channel"/>
    <property type="match status" value="1"/>
</dbReference>
<dbReference type="PROSITE" id="PS01327">
    <property type="entry name" value="MSCL"/>
    <property type="match status" value="1"/>
</dbReference>
<comment type="function">
    <text evidence="1">Channel that opens in response to stretch forces in the membrane lipid bilayer. May participate in the regulation of osmotic pressure changes within the cell.</text>
</comment>
<comment type="subunit">
    <text evidence="1">Homopentamer.</text>
</comment>
<comment type="subcellular location">
    <subcellularLocation>
        <location evidence="1">Cell membrane</location>
        <topology evidence="1">Multi-pass membrane protein</topology>
    </subcellularLocation>
</comment>
<comment type="similarity">
    <text evidence="1">Belongs to the MscL family.</text>
</comment>
<evidence type="ECO:0000255" key="1">
    <source>
        <dbReference type="HAMAP-Rule" id="MF_00115"/>
    </source>
</evidence>
<gene>
    <name evidence="1" type="primary">mscL</name>
    <name type="ordered locus">LL2101</name>
    <name type="ORF">L153973</name>
</gene>
<name>MSCL_LACLA</name>
<feature type="chain" id="PRO_0000192445" description="Large-conductance mechanosensitive channel">
    <location>
        <begin position="1"/>
        <end position="122"/>
    </location>
</feature>
<feature type="transmembrane region" description="Helical" evidence="1">
    <location>
        <begin position="14"/>
        <end position="34"/>
    </location>
</feature>
<feature type="transmembrane region" description="Helical" evidence="1">
    <location>
        <begin position="67"/>
        <end position="87"/>
    </location>
</feature>
<keyword id="KW-1003">Cell membrane</keyword>
<keyword id="KW-0407">Ion channel</keyword>
<keyword id="KW-0406">Ion transport</keyword>
<keyword id="KW-0472">Membrane</keyword>
<keyword id="KW-1185">Reference proteome</keyword>
<keyword id="KW-0812">Transmembrane</keyword>
<keyword id="KW-1133">Transmembrane helix</keyword>
<keyword id="KW-0813">Transport</keyword>
<reference key="1">
    <citation type="journal article" date="2001" name="Genome Res.">
        <title>The complete genome sequence of the lactic acid bacterium Lactococcus lactis ssp. lactis IL1403.</title>
        <authorList>
            <person name="Bolotin A."/>
            <person name="Wincker P."/>
            <person name="Mauger S."/>
            <person name="Jaillon O."/>
            <person name="Malarme K."/>
            <person name="Weissenbach J."/>
            <person name="Ehrlich S.D."/>
            <person name="Sorokin A."/>
        </authorList>
    </citation>
    <scope>NUCLEOTIDE SEQUENCE [LARGE SCALE GENOMIC DNA]</scope>
    <source>
        <strain>IL1403</strain>
    </source>
</reference>